<sequence length="931" mass="103135">MRKGLRATAARCGLGLGYLLQMLVLPALALLSASGTGSAAQDDDFFHELPETFPSDPPEPLPHFLIEPEEAYIVKNKPVNLYCKASPATQIYFKCNSEWVHQKDHVVDERVDETSGLIVREVSIEISRQQVEELFGPEDYWCQCVAWSSAGTTKSRKAYVRIAYLRKTFEQEPLGKEVSLEQEVLLQCRPPEGIPMAEVEWLKNEDIIDPVEDRNFYITIDHNLIIKQARLSDTANYTCVAKNIVAKRKSTTATVIVYVNGGWSTWAEWSVCNSRCGRGYQKRTRTCTNPAPLNGGAFCEGQSVQKIACTTLCPVDGRWTSWSKWSTCGTECTHWRRRECTAPAPKNGGKDCDGLVLQSKNCTDGLCMQAAPDSDDVALYVGIVIAVTVCLAITVVVALFVYRKNHRDFESNIIDSSALNGGFQPVNIKAARQDLLAVPPDLTSAAAMYRGPVYALHDVSDKIPMTNSPILDPLPNLKIKVYNSSGAVTPQDDLAEFSSKLSPQMTQSLLENEALNLKNQSLARQTDPSCTAFGTFNSLGGHLIIPNSGVSLLIPAGAIPQGRVYEMYVTVHRKENMRPPMEDSQTLLTPVVSCGPPGALLTRPVILTLHHCADPNTEDWKIQLKNQAVQGQWEDVVVVGEENFTTPCYIQLDAEACHILTENLSTYALVGQSTTKAAAKRLKLAIFGPLCCSSLEYSIRVYCLDDTQDALKEVLQLERQMGGQLLEEPKALHFKGSIHNLRLSIHDITHSLWKSKLLAKYQEIPFYHIWSGSQRNLHCTFTLERLSLNTVELVCKLCVRQVEGEGQIFQLNCTVSEEPTGIDLPLLDPASTITTVTGPSAFSIPLPIRQKLCSSLDAPQTRGHDWRMLAHKLNLDRYLNYFATKSSPTGVILDLWEAQNFPDGNLSMLAAVLEEMGRHETVVSLAAEGQY</sequence>
<dbReference type="EMBL" id="AB118026">
    <property type="protein sequence ID" value="BAD05181.1"/>
    <property type="molecule type" value="mRNA"/>
</dbReference>
<dbReference type="RefSeq" id="NP_955439.1">
    <property type="nucleotide sequence ID" value="NM_199407.1"/>
</dbReference>
<dbReference type="SMR" id="Q761X5"/>
<dbReference type="FunCoup" id="Q761X5">
    <property type="interactions" value="1682"/>
</dbReference>
<dbReference type="STRING" id="10116.ENSRNOP00000068741"/>
<dbReference type="GlyCosmos" id="Q761X5">
    <property type="glycosylation" value="2 sites, No reported glycans"/>
</dbReference>
<dbReference type="GlyGen" id="Q761X5">
    <property type="glycosylation" value="2 sites"/>
</dbReference>
<dbReference type="iPTMnet" id="Q761X5"/>
<dbReference type="PhosphoSitePlus" id="Q761X5"/>
<dbReference type="jPOST" id="Q761X5"/>
<dbReference type="PaxDb" id="10116-ENSRNOP00000050380"/>
<dbReference type="GeneID" id="362049"/>
<dbReference type="KEGG" id="rno:362049"/>
<dbReference type="AGR" id="RGD:735109"/>
<dbReference type="CTD" id="8633"/>
<dbReference type="RGD" id="735109">
    <property type="gene designation" value="Unc5c"/>
</dbReference>
<dbReference type="eggNOG" id="KOG1480">
    <property type="taxonomic scope" value="Eukaryota"/>
</dbReference>
<dbReference type="InParanoid" id="Q761X5"/>
<dbReference type="OrthoDB" id="6510589at2759"/>
<dbReference type="PhylomeDB" id="Q761X5"/>
<dbReference type="PRO" id="PR:Q761X5"/>
<dbReference type="Proteomes" id="UP000002494">
    <property type="component" value="Unplaced"/>
</dbReference>
<dbReference type="GO" id="GO:0030424">
    <property type="term" value="C:axon"/>
    <property type="evidence" value="ECO:0000250"/>
    <property type="project" value="UniProtKB"/>
</dbReference>
<dbReference type="GO" id="GO:0009986">
    <property type="term" value="C:cell surface"/>
    <property type="evidence" value="ECO:0007669"/>
    <property type="project" value="UniProtKB-SubCell"/>
</dbReference>
<dbReference type="GO" id="GO:0030425">
    <property type="term" value="C:dendrite"/>
    <property type="evidence" value="ECO:0000250"/>
    <property type="project" value="UniProtKB"/>
</dbReference>
<dbReference type="GO" id="GO:0030175">
    <property type="term" value="C:filopodium"/>
    <property type="evidence" value="ECO:0000250"/>
    <property type="project" value="UniProtKB"/>
</dbReference>
<dbReference type="GO" id="GO:0030426">
    <property type="term" value="C:growth cone"/>
    <property type="evidence" value="ECO:0000250"/>
    <property type="project" value="UniProtKB"/>
</dbReference>
<dbReference type="GO" id="GO:0030027">
    <property type="term" value="C:lamellipodium"/>
    <property type="evidence" value="ECO:0000250"/>
    <property type="project" value="UniProtKB"/>
</dbReference>
<dbReference type="GO" id="GO:0043025">
    <property type="term" value="C:neuronal cell body"/>
    <property type="evidence" value="ECO:0000250"/>
    <property type="project" value="UniProtKB"/>
</dbReference>
<dbReference type="GO" id="GO:0005886">
    <property type="term" value="C:plasma membrane"/>
    <property type="evidence" value="ECO:0000250"/>
    <property type="project" value="UniProtKB"/>
</dbReference>
<dbReference type="GO" id="GO:0045202">
    <property type="term" value="C:synapse"/>
    <property type="evidence" value="ECO:0007669"/>
    <property type="project" value="UniProtKB-SubCell"/>
</dbReference>
<dbReference type="GO" id="GO:0005042">
    <property type="term" value="F:netrin receptor activity"/>
    <property type="evidence" value="ECO:0000266"/>
    <property type="project" value="RGD"/>
</dbReference>
<dbReference type="GO" id="GO:0005043">
    <property type="term" value="F:netrin receptor activity involved in chemorepulsion"/>
    <property type="evidence" value="ECO:0000250"/>
    <property type="project" value="UniProtKB"/>
</dbReference>
<dbReference type="GO" id="GO:0019901">
    <property type="term" value="F:protein kinase binding"/>
    <property type="evidence" value="ECO:0000266"/>
    <property type="project" value="RGD"/>
</dbReference>
<dbReference type="GO" id="GO:0015631">
    <property type="term" value="F:tubulin binding"/>
    <property type="evidence" value="ECO:0000266"/>
    <property type="project" value="RGD"/>
</dbReference>
<dbReference type="GO" id="GO:0033564">
    <property type="term" value="P:anterior/posterior axon guidance"/>
    <property type="evidence" value="ECO:0000266"/>
    <property type="project" value="RGD"/>
</dbReference>
<dbReference type="GO" id="GO:0006915">
    <property type="term" value="P:apoptotic process"/>
    <property type="evidence" value="ECO:0000266"/>
    <property type="project" value="RGD"/>
</dbReference>
<dbReference type="GO" id="GO:0007411">
    <property type="term" value="P:axon guidance"/>
    <property type="evidence" value="ECO:0000250"/>
    <property type="project" value="UniProtKB"/>
</dbReference>
<dbReference type="GO" id="GO:0007420">
    <property type="term" value="P:brain development"/>
    <property type="evidence" value="ECO:0000266"/>
    <property type="project" value="RGD"/>
</dbReference>
<dbReference type="GO" id="GO:0061643">
    <property type="term" value="P:chemorepulsion of axon"/>
    <property type="evidence" value="ECO:0000250"/>
    <property type="project" value="UniProtKB"/>
</dbReference>
<dbReference type="GO" id="GO:1990791">
    <property type="term" value="P:dorsal root ganglion development"/>
    <property type="evidence" value="ECO:0000250"/>
    <property type="project" value="UniProtKB"/>
</dbReference>
<dbReference type="GO" id="GO:0035234">
    <property type="term" value="P:ectopic germ cell programmed cell death"/>
    <property type="evidence" value="ECO:0000266"/>
    <property type="project" value="RGD"/>
</dbReference>
<dbReference type="GO" id="GO:0038007">
    <property type="term" value="P:netrin-activated signaling pathway"/>
    <property type="evidence" value="ECO:0000266"/>
    <property type="project" value="RGD"/>
</dbReference>
<dbReference type="GO" id="GO:0043065">
    <property type="term" value="P:positive regulation of apoptotic process"/>
    <property type="evidence" value="ECO:0000266"/>
    <property type="project" value="RGD"/>
</dbReference>
<dbReference type="GO" id="GO:0051094">
    <property type="term" value="P:positive regulation of developmental process"/>
    <property type="evidence" value="ECO:0000266"/>
    <property type="project" value="RGD"/>
</dbReference>
<dbReference type="GO" id="GO:2000243">
    <property type="term" value="P:positive regulation of reproductive process"/>
    <property type="evidence" value="ECO:0000266"/>
    <property type="project" value="RGD"/>
</dbReference>
<dbReference type="GO" id="GO:0030334">
    <property type="term" value="P:regulation of cell migration"/>
    <property type="evidence" value="ECO:0000266"/>
    <property type="project" value="RGD"/>
</dbReference>
<dbReference type="GO" id="GO:2001222">
    <property type="term" value="P:regulation of neuron migration"/>
    <property type="evidence" value="ECO:0000266"/>
    <property type="project" value="RGD"/>
</dbReference>
<dbReference type="CDD" id="cd08799">
    <property type="entry name" value="Death_UNC5C"/>
    <property type="match status" value="1"/>
</dbReference>
<dbReference type="FunFam" id="1.10.533.10:FF:000001">
    <property type="entry name" value="Unc-5 netrin receptor B"/>
    <property type="match status" value="1"/>
</dbReference>
<dbReference type="FunFam" id="2.20.100.10:FF:000002">
    <property type="entry name" value="Unc-5 netrin receptor C"/>
    <property type="match status" value="1"/>
</dbReference>
<dbReference type="FunFam" id="2.20.100.10:FF:000008">
    <property type="entry name" value="Unc-5 netrin receptor C"/>
    <property type="match status" value="1"/>
</dbReference>
<dbReference type="FunFam" id="2.60.220.30:FF:000003">
    <property type="entry name" value="Unc-5 netrin receptor C"/>
    <property type="match status" value="1"/>
</dbReference>
<dbReference type="FunFam" id="2.60.40.10:FF:000037">
    <property type="entry name" value="Unc-5 netrin receptor C"/>
    <property type="match status" value="1"/>
</dbReference>
<dbReference type="FunFam" id="2.60.40.10:FF:000039">
    <property type="entry name" value="Unc-5 netrin receptor C"/>
    <property type="match status" value="1"/>
</dbReference>
<dbReference type="Gene3D" id="2.60.220.30">
    <property type="match status" value="1"/>
</dbReference>
<dbReference type="Gene3D" id="1.10.533.10">
    <property type="entry name" value="Death Domain, Fas"/>
    <property type="match status" value="1"/>
</dbReference>
<dbReference type="Gene3D" id="2.60.40.10">
    <property type="entry name" value="Immunoglobulins"/>
    <property type="match status" value="2"/>
</dbReference>
<dbReference type="Gene3D" id="2.20.100.10">
    <property type="entry name" value="Thrombospondin type-1 (TSP1) repeat"/>
    <property type="match status" value="2"/>
</dbReference>
<dbReference type="InterPro" id="IPR011029">
    <property type="entry name" value="DEATH-like_dom_sf"/>
</dbReference>
<dbReference type="InterPro" id="IPR000488">
    <property type="entry name" value="Death_dom"/>
</dbReference>
<dbReference type="InterPro" id="IPR042154">
    <property type="entry name" value="Death_UNC5C"/>
</dbReference>
<dbReference type="InterPro" id="IPR007110">
    <property type="entry name" value="Ig-like_dom"/>
</dbReference>
<dbReference type="InterPro" id="IPR036179">
    <property type="entry name" value="Ig-like_dom_sf"/>
</dbReference>
<dbReference type="InterPro" id="IPR013783">
    <property type="entry name" value="Ig-like_fold"/>
</dbReference>
<dbReference type="InterPro" id="IPR013098">
    <property type="entry name" value="Ig_I-set"/>
</dbReference>
<dbReference type="InterPro" id="IPR003599">
    <property type="entry name" value="Ig_sub"/>
</dbReference>
<dbReference type="InterPro" id="IPR003598">
    <property type="entry name" value="Ig_sub2"/>
</dbReference>
<dbReference type="InterPro" id="IPR000884">
    <property type="entry name" value="TSP1_rpt"/>
</dbReference>
<dbReference type="InterPro" id="IPR036383">
    <property type="entry name" value="TSP1_rpt_sf"/>
</dbReference>
<dbReference type="InterPro" id="IPR037936">
    <property type="entry name" value="UNC5"/>
</dbReference>
<dbReference type="InterPro" id="IPR033772">
    <property type="entry name" value="UPA"/>
</dbReference>
<dbReference type="InterPro" id="IPR000906">
    <property type="entry name" value="ZU5_dom"/>
</dbReference>
<dbReference type="PANTHER" id="PTHR12582">
    <property type="entry name" value="NETRIN RECEPTOR UNC5"/>
    <property type="match status" value="1"/>
</dbReference>
<dbReference type="PANTHER" id="PTHR12582:SF7">
    <property type="entry name" value="NETRIN RECEPTOR UNC5C"/>
    <property type="match status" value="1"/>
</dbReference>
<dbReference type="Pfam" id="PF00531">
    <property type="entry name" value="Death"/>
    <property type="match status" value="1"/>
</dbReference>
<dbReference type="Pfam" id="PF07679">
    <property type="entry name" value="I-set"/>
    <property type="match status" value="1"/>
</dbReference>
<dbReference type="Pfam" id="PF00090">
    <property type="entry name" value="TSP_1"/>
    <property type="match status" value="1"/>
</dbReference>
<dbReference type="Pfam" id="PF17217">
    <property type="entry name" value="UPA"/>
    <property type="match status" value="1"/>
</dbReference>
<dbReference type="Pfam" id="PF00791">
    <property type="entry name" value="ZU5"/>
    <property type="match status" value="1"/>
</dbReference>
<dbReference type="PRINTS" id="PR01705">
    <property type="entry name" value="TSP1REPEAT"/>
</dbReference>
<dbReference type="SMART" id="SM00005">
    <property type="entry name" value="DEATH"/>
    <property type="match status" value="1"/>
</dbReference>
<dbReference type="SMART" id="SM00409">
    <property type="entry name" value="IG"/>
    <property type="match status" value="1"/>
</dbReference>
<dbReference type="SMART" id="SM00408">
    <property type="entry name" value="IGc2"/>
    <property type="match status" value="1"/>
</dbReference>
<dbReference type="SMART" id="SM00209">
    <property type="entry name" value="TSP1"/>
    <property type="match status" value="2"/>
</dbReference>
<dbReference type="SMART" id="SM00218">
    <property type="entry name" value="ZU5"/>
    <property type="match status" value="1"/>
</dbReference>
<dbReference type="SUPFAM" id="SSF47986">
    <property type="entry name" value="DEATH domain"/>
    <property type="match status" value="1"/>
</dbReference>
<dbReference type="SUPFAM" id="SSF48726">
    <property type="entry name" value="Immunoglobulin"/>
    <property type="match status" value="2"/>
</dbReference>
<dbReference type="SUPFAM" id="SSF82895">
    <property type="entry name" value="TSP-1 type 1 repeat"/>
    <property type="match status" value="2"/>
</dbReference>
<dbReference type="PROSITE" id="PS50835">
    <property type="entry name" value="IG_LIKE"/>
    <property type="match status" value="1"/>
</dbReference>
<dbReference type="PROSITE" id="PS50092">
    <property type="entry name" value="TSP1"/>
    <property type="match status" value="2"/>
</dbReference>
<dbReference type="PROSITE" id="PS51145">
    <property type="entry name" value="ZU5"/>
    <property type="match status" value="1"/>
</dbReference>
<gene>
    <name type="primary">Unc5c</name>
    <name evidence="10" type="synonym">Unc5h3</name>
</gene>
<keyword id="KW-0053">Apoptosis</keyword>
<keyword id="KW-1003">Cell membrane</keyword>
<keyword id="KW-0966">Cell projection</keyword>
<keyword id="KW-0217">Developmental protein</keyword>
<keyword id="KW-1015">Disulfide bond</keyword>
<keyword id="KW-0325">Glycoprotein</keyword>
<keyword id="KW-0393">Immunoglobulin domain</keyword>
<keyword id="KW-0472">Membrane</keyword>
<keyword id="KW-0597">Phosphoprotein</keyword>
<keyword id="KW-0675">Receptor</keyword>
<keyword id="KW-1185">Reference proteome</keyword>
<keyword id="KW-0677">Repeat</keyword>
<keyword id="KW-0732">Signal</keyword>
<keyword id="KW-0770">Synapse</keyword>
<keyword id="KW-0771">Synaptosome</keyword>
<keyword id="KW-0812">Transmembrane</keyword>
<keyword id="KW-1133">Transmembrane helix</keyword>
<evidence type="ECO:0000250" key="1">
    <source>
        <dbReference type="UniProtKB" id="O08747"/>
    </source>
</evidence>
<evidence type="ECO:0000250" key="2">
    <source>
        <dbReference type="UniProtKB" id="O95185"/>
    </source>
</evidence>
<evidence type="ECO:0000250" key="3">
    <source>
        <dbReference type="UniProtKB" id="Q6ZN44"/>
    </source>
</evidence>
<evidence type="ECO:0000255" key="4"/>
<evidence type="ECO:0000255" key="5">
    <source>
        <dbReference type="PROSITE-ProRule" id="PRU00210"/>
    </source>
</evidence>
<evidence type="ECO:0000255" key="6">
    <source>
        <dbReference type="PROSITE-ProRule" id="PRU00485"/>
    </source>
</evidence>
<evidence type="ECO:0000269" key="7">
    <source>
    </source>
</evidence>
<evidence type="ECO:0000269" key="8">
    <source>
    </source>
</evidence>
<evidence type="ECO:0000269" key="9">
    <source>
    </source>
</evidence>
<evidence type="ECO:0000303" key="10">
    <source>
    </source>
</evidence>
<evidence type="ECO:0000305" key="11"/>
<evidence type="ECO:0000305" key="12">
    <source>
    </source>
</evidence>
<evidence type="ECO:0007744" key="13">
    <source>
    </source>
</evidence>
<name>UNC5C_RAT</name>
<comment type="function">
    <text evidence="1 2 7">Receptor for netrin required for axon guidance (By similarity). Mediates axon repulsion of neuronal growth cones in the developing nervous system upon ligand binding (By similarity). NTN1/Netrin-1 binding might cause dissociation of UNC5C from polymerized TUBB3 in microtubules and thereby lead to increased microtubule dynamics and axon repulsion (By similarity). Axon repulsion in growth cones may also be caused by its association with DCC that may trigger signaling for repulsion (By similarity). Might also collaborate with DSCAM in NTN1-mediated axon repulsion independently of DCC (By similarity). Also involved in corticospinal tract axon guidance independently of DCC (By similarity). Involved in dorsal root ganglion axon projection towards the spinal cord (By similarity). It also acts as a dependence receptor required for apoptosis induction when not associated with netrin ligand (PubMed:11387206).</text>
</comment>
<comment type="subunit">
    <text evidence="1 2">Interacts with DCC (via cytoplasmic domain) (By similarity). Interacts (tyrosine phosphorylated form) with PTPN11 (By similarity). Interacts (via extracellular domain) with FLRT3 (via extracellular domain) (By similarity). Interacts (via Ig-like C2-type domain) with DSCAM (via extracellular domain) (By similarity). Interacts (via death domain) with DAPK1 (By similarity). Interacts (via cytoplasmic domain) with TUBB3; this interaction is decreased by NTN1/Netrin-1 (By similarity).</text>
</comment>
<comment type="subcellular location">
    <subcellularLocation>
        <location evidence="1">Cell membrane</location>
        <topology evidence="4">Single-pass type I membrane protein</topology>
    </subcellularLocation>
    <subcellularLocation>
        <location evidence="2">Cell surface</location>
    </subcellularLocation>
    <subcellularLocation>
        <location evidence="9">Synapse</location>
        <location evidence="9">Synaptosome</location>
    </subcellularLocation>
    <subcellularLocation>
        <location evidence="1">Cell projection</location>
        <location evidence="1">Axon</location>
    </subcellularLocation>
    <subcellularLocation>
        <location evidence="1">Cell projection</location>
        <location evidence="1">Dendrite</location>
    </subcellularLocation>
    <subcellularLocation>
        <location evidence="1">Cell projection</location>
        <location evidence="1">Growth cone</location>
    </subcellularLocation>
    <subcellularLocation>
        <location evidence="1">Cell projection</location>
        <location evidence="1">Lamellipodium</location>
    </subcellularLocation>
    <subcellularLocation>
        <location evidence="1">Cell projection</location>
        <location evidence="1">Filopodium</location>
    </subcellularLocation>
</comment>
<comment type="tissue specificity">
    <text>Detected in brain (at protein level) (PubMed:22405201). Mainly expressed in brain. Also expressed in kidney. Not expressed in developing or adult lung.</text>
</comment>
<comment type="PTM">
    <text evidence="7">Proteolytically cleaved by caspases during apoptosis. The cleavage does not take place when the receptor is associated with netrin ligand. Its cleavage by caspases is required to induce apoptosis.</text>
</comment>
<comment type="PTM">
    <text evidence="1">Phosphorylated on different cytoplasmic tyrosine residues. Phosphorylation of Tyr-568 leads to an interaction with PTPN11 phosphatase, suggesting that its activity is regulated by phosphorylation/dephosphorylation. Tyrosine phosphorylation is netrin-dependent.</text>
</comment>
<comment type="disease">
    <text evidence="8">Defects in Unc5c are the cause of cerebellar vermis defect (cvd) and hobble (hob) phenotypes. Cvd and hob rats exhibit cerebellar and midbrain defects, possibly as a result of abnormal neuronal migration, and exhibit laminar structure abnormalities in the fused cerebellar hemispheres and ectopic cerebellar tissues in the cerebello-pontine junction.</text>
</comment>
<comment type="similarity">
    <text evidence="11">Belongs to the unc-5 family.</text>
</comment>
<protein>
    <recommendedName>
        <fullName>Netrin receptor UNC5C</fullName>
    </recommendedName>
    <alternativeName>
        <fullName>Protein unc-5 homolog 3</fullName>
    </alternativeName>
    <alternativeName>
        <fullName>Protein unc-5 homolog C</fullName>
    </alternativeName>
</protein>
<proteinExistence type="evidence at protein level"/>
<organism>
    <name type="scientific">Rattus norvegicus</name>
    <name type="common">Rat</name>
    <dbReference type="NCBI Taxonomy" id="10116"/>
    <lineage>
        <taxon>Eukaryota</taxon>
        <taxon>Metazoa</taxon>
        <taxon>Chordata</taxon>
        <taxon>Craniata</taxon>
        <taxon>Vertebrata</taxon>
        <taxon>Euteleostomi</taxon>
        <taxon>Mammalia</taxon>
        <taxon>Eutheria</taxon>
        <taxon>Euarchontoglires</taxon>
        <taxon>Glires</taxon>
        <taxon>Rodentia</taxon>
        <taxon>Myomorpha</taxon>
        <taxon>Muroidea</taxon>
        <taxon>Muridae</taxon>
        <taxon>Murinae</taxon>
        <taxon>Rattus</taxon>
    </lineage>
</organism>
<accession>Q761X5</accession>
<feature type="signal peptide" evidence="4">
    <location>
        <begin position="1"/>
        <end position="40"/>
    </location>
</feature>
<feature type="chain" id="PRO_0000036077" description="Netrin receptor UNC5C">
    <location>
        <begin position="41"/>
        <end position="931"/>
    </location>
</feature>
<feature type="topological domain" description="Extracellular" evidence="4">
    <location>
        <begin position="41"/>
        <end position="380"/>
    </location>
</feature>
<feature type="transmembrane region" description="Helical" evidence="4">
    <location>
        <begin position="381"/>
        <end position="401"/>
    </location>
</feature>
<feature type="topological domain" description="Cytoplasmic" evidence="4">
    <location>
        <begin position="402"/>
        <end position="931"/>
    </location>
</feature>
<feature type="domain" description="Ig-like">
    <location>
        <begin position="62"/>
        <end position="159"/>
    </location>
</feature>
<feature type="domain" description="Ig-like C2-type">
    <location>
        <begin position="161"/>
        <end position="256"/>
    </location>
</feature>
<feature type="domain" description="TSP type-1 1" evidence="5">
    <location>
        <begin position="260"/>
        <end position="314"/>
    </location>
</feature>
<feature type="domain" description="TSP type-1 2" evidence="5">
    <location>
        <begin position="316"/>
        <end position="368"/>
    </location>
</feature>
<feature type="domain" description="ZU5" evidence="6">
    <location>
        <begin position="530"/>
        <end position="673"/>
    </location>
</feature>
<feature type="domain" description="Death">
    <location>
        <begin position="850"/>
        <end position="929"/>
    </location>
</feature>
<feature type="region of interest" description="Required for netrin-mediated axon repulsion of neuronal growth cones" evidence="1">
    <location>
        <begin position="402"/>
        <end position="931"/>
    </location>
</feature>
<feature type="region of interest" description="Interaction with DCC" evidence="1">
    <location>
        <begin position="694"/>
        <end position="712"/>
    </location>
</feature>
<feature type="site" description="Cleavage; by caspase-3" evidence="12">
    <location>
        <begin position="415"/>
        <end position="416"/>
    </location>
</feature>
<feature type="modified residue" description="Phosphoserine" evidence="13">
    <location>
        <position position="502"/>
    </location>
</feature>
<feature type="modified residue" description="Phosphotyrosine" evidence="1">
    <location>
        <position position="568"/>
    </location>
</feature>
<feature type="glycosylation site" description="N-linked (GlcNAc...) asparagine" evidence="4">
    <location>
        <position position="236"/>
    </location>
</feature>
<feature type="glycosylation site" description="N-linked (GlcNAc...) asparagine" evidence="4">
    <location>
        <position position="361"/>
    </location>
</feature>
<feature type="disulfide bond" evidence="3">
    <location>
        <begin position="83"/>
        <end position="144"/>
    </location>
</feature>
<feature type="disulfide bond" evidence="3">
    <location>
        <begin position="95"/>
        <end position="142"/>
    </location>
</feature>
<feature type="disulfide bond" evidence="3">
    <location>
        <begin position="188"/>
        <end position="239"/>
    </location>
</feature>
<feature type="disulfide bond" evidence="5">
    <location>
        <begin position="272"/>
        <end position="309"/>
    </location>
</feature>
<feature type="disulfide bond" evidence="5">
    <location>
        <begin position="276"/>
        <end position="313"/>
    </location>
</feature>
<feature type="disulfide bond" evidence="5">
    <location>
        <begin position="287"/>
        <end position="299"/>
    </location>
</feature>
<feature type="disulfide bond" evidence="3">
    <location>
        <begin position="328"/>
        <end position="362"/>
    </location>
</feature>
<feature type="disulfide bond" evidence="3">
    <location>
        <begin position="332"/>
        <end position="367"/>
    </location>
</feature>
<feature type="disulfide bond" evidence="3">
    <location>
        <begin position="340"/>
        <end position="352"/>
    </location>
</feature>
<reference key="1">
    <citation type="journal article" date="2004" name="Brain Res. Mol. Brain Res.">
        <title>Rat neurological mutations cerebellar vermis defect and hobble are caused by mutations in the netrin-1 receptor gene Unc5h3.</title>
        <authorList>
            <person name="Kuramoto T."/>
            <person name="Kuwamura M."/>
            <person name="Serikawa T."/>
        </authorList>
    </citation>
    <scope>NUCLEOTIDE SEQUENCE [MRNA]</scope>
    <scope>DISEASE</scope>
</reference>
<reference key="2">
    <citation type="journal article" date="2001" name="EMBO J.">
        <title>Netrin-1 acts as a survival factor via its receptors UNC5H and DCC.</title>
        <authorList>
            <person name="Llambi F."/>
            <person name="Causeret F."/>
            <person name="Bloch-Gallego E."/>
            <person name="Mehlen P."/>
        </authorList>
    </citation>
    <scope>FUNCTION</scope>
    <scope>PROTEOLYTIC CLEAVAGE</scope>
</reference>
<reference key="3">
    <citation type="journal article" date="2012" name="Nat. Commun.">
        <title>Quantitative maps of protein phosphorylation sites across 14 different rat organs and tissues.</title>
        <authorList>
            <person name="Lundby A."/>
            <person name="Secher A."/>
            <person name="Lage K."/>
            <person name="Nordsborg N.B."/>
            <person name="Dmytriyev A."/>
            <person name="Lundby C."/>
            <person name="Olsen J.V."/>
        </authorList>
    </citation>
    <scope>PHOSPHORYLATION [LARGE SCALE ANALYSIS] AT SER-502</scope>
    <scope>IDENTIFICATION BY MASS SPECTROMETRY [LARGE SCALE ANALYSIS]</scope>
</reference>
<reference key="4">
    <citation type="journal article" date="2012" name="Neuron">
        <title>FLRT proteins are endogenous latrophilin ligands and regulate excitatory synapse development.</title>
        <authorList>
            <person name="O'Sullivan M.L."/>
            <person name="de Wit J."/>
            <person name="Savas J.N."/>
            <person name="Comoletti D."/>
            <person name="Otto-Hitt S."/>
            <person name="Yates J.R. III"/>
            <person name="Ghosh A."/>
        </authorList>
    </citation>
    <scope>IDENTIFICATION BY MASS SPECTROMETRY</scope>
    <scope>SUBCELLULAR LOCATION</scope>
    <scope>TISSUE SPECIFICITY</scope>
</reference>